<organism>
    <name type="scientific">Cereibacter sphaeroides</name>
    <name type="common">Rhodobacter sphaeroides</name>
    <dbReference type="NCBI Taxonomy" id="1063"/>
    <lineage>
        <taxon>Bacteria</taxon>
        <taxon>Pseudomonadati</taxon>
        <taxon>Pseudomonadota</taxon>
        <taxon>Alphaproteobacteria</taxon>
        <taxon>Rhodobacterales</taxon>
        <taxon>Paracoccaceae</taxon>
        <taxon>Cereibacter</taxon>
    </lineage>
</organism>
<sequence length="70" mass="7673">MSDIADRVKKIVVEHLGVEEEKVTETTSFIDDLGADSLDTVELVMAFEEEFGIEIPDDAAETIQTFGDAP</sequence>
<dbReference type="PIR" id="B36728">
    <property type="entry name" value="B36728"/>
</dbReference>
<dbReference type="SMR" id="P12784"/>
<dbReference type="UniPathway" id="UPA00094"/>
<dbReference type="GO" id="GO:0005829">
    <property type="term" value="C:cytosol"/>
    <property type="evidence" value="ECO:0007669"/>
    <property type="project" value="TreeGrafter"/>
</dbReference>
<dbReference type="GO" id="GO:0016020">
    <property type="term" value="C:membrane"/>
    <property type="evidence" value="ECO:0007669"/>
    <property type="project" value="GOC"/>
</dbReference>
<dbReference type="GO" id="GO:0000035">
    <property type="term" value="F:acyl binding"/>
    <property type="evidence" value="ECO:0007669"/>
    <property type="project" value="TreeGrafter"/>
</dbReference>
<dbReference type="GO" id="GO:0000036">
    <property type="term" value="F:acyl carrier activity"/>
    <property type="evidence" value="ECO:0007669"/>
    <property type="project" value="UniProtKB-UniRule"/>
</dbReference>
<dbReference type="GO" id="GO:0031177">
    <property type="term" value="F:phosphopantetheine binding"/>
    <property type="evidence" value="ECO:0007669"/>
    <property type="project" value="InterPro"/>
</dbReference>
<dbReference type="GO" id="GO:0009245">
    <property type="term" value="P:lipid A biosynthetic process"/>
    <property type="evidence" value="ECO:0007669"/>
    <property type="project" value="TreeGrafter"/>
</dbReference>
<dbReference type="FunFam" id="1.10.1200.10:FF:000003">
    <property type="entry name" value="Acyl carrier protein"/>
    <property type="match status" value="1"/>
</dbReference>
<dbReference type="Gene3D" id="1.10.1200.10">
    <property type="entry name" value="ACP-like"/>
    <property type="match status" value="1"/>
</dbReference>
<dbReference type="HAMAP" id="MF_01217">
    <property type="entry name" value="Acyl_carrier"/>
    <property type="match status" value="1"/>
</dbReference>
<dbReference type="InterPro" id="IPR003231">
    <property type="entry name" value="ACP"/>
</dbReference>
<dbReference type="InterPro" id="IPR036736">
    <property type="entry name" value="ACP-like_sf"/>
</dbReference>
<dbReference type="InterPro" id="IPR020806">
    <property type="entry name" value="PKS_PP-bd"/>
</dbReference>
<dbReference type="InterPro" id="IPR009081">
    <property type="entry name" value="PP-bd_ACP"/>
</dbReference>
<dbReference type="InterPro" id="IPR006162">
    <property type="entry name" value="Ppantetheine_attach_site"/>
</dbReference>
<dbReference type="NCBIfam" id="TIGR00517">
    <property type="entry name" value="acyl_carrier"/>
    <property type="match status" value="1"/>
</dbReference>
<dbReference type="NCBIfam" id="NF002148">
    <property type="entry name" value="PRK00982.1-2"/>
    <property type="match status" value="1"/>
</dbReference>
<dbReference type="NCBIfam" id="NF002149">
    <property type="entry name" value="PRK00982.1-3"/>
    <property type="match status" value="1"/>
</dbReference>
<dbReference type="NCBIfam" id="NF002150">
    <property type="entry name" value="PRK00982.1-4"/>
    <property type="match status" value="1"/>
</dbReference>
<dbReference type="NCBIfam" id="NF002151">
    <property type="entry name" value="PRK00982.1-5"/>
    <property type="match status" value="1"/>
</dbReference>
<dbReference type="PANTHER" id="PTHR20863">
    <property type="entry name" value="ACYL CARRIER PROTEIN"/>
    <property type="match status" value="1"/>
</dbReference>
<dbReference type="PANTHER" id="PTHR20863:SF76">
    <property type="entry name" value="CARRIER DOMAIN-CONTAINING PROTEIN"/>
    <property type="match status" value="1"/>
</dbReference>
<dbReference type="Pfam" id="PF00550">
    <property type="entry name" value="PP-binding"/>
    <property type="match status" value="1"/>
</dbReference>
<dbReference type="SMART" id="SM00823">
    <property type="entry name" value="PKS_PP"/>
    <property type="match status" value="1"/>
</dbReference>
<dbReference type="SUPFAM" id="SSF47336">
    <property type="entry name" value="ACP-like"/>
    <property type="match status" value="1"/>
</dbReference>
<dbReference type="PROSITE" id="PS50075">
    <property type="entry name" value="CARRIER"/>
    <property type="match status" value="1"/>
</dbReference>
<dbReference type="PROSITE" id="PS00012">
    <property type="entry name" value="PHOSPHOPANTETHEINE"/>
    <property type="match status" value="1"/>
</dbReference>
<gene>
    <name evidence="1" type="primary">acpP</name>
</gene>
<keyword id="KW-0963">Cytoplasm</keyword>
<keyword id="KW-0903">Direct protein sequencing</keyword>
<keyword id="KW-0275">Fatty acid biosynthesis</keyword>
<keyword id="KW-0276">Fatty acid metabolism</keyword>
<keyword id="KW-0444">Lipid biosynthesis</keyword>
<keyword id="KW-0443">Lipid metabolism</keyword>
<keyword id="KW-0596">Phosphopantetheine</keyword>
<keyword id="KW-0597">Phosphoprotein</keyword>
<evidence type="ECO:0000255" key="1">
    <source>
        <dbReference type="HAMAP-Rule" id="MF_01217"/>
    </source>
</evidence>
<evidence type="ECO:0000255" key="2">
    <source>
        <dbReference type="PROSITE-ProRule" id="PRU00258"/>
    </source>
</evidence>
<evidence type="ECO:0000269" key="3">
    <source>
    </source>
</evidence>
<evidence type="ECO:0000269" key="4">
    <source>
    </source>
</evidence>
<reference key="1">
    <citation type="journal article" date="1990" name="J. Bacteriol.">
        <title>Isolation and characterization of the constitutive acyl carrier protein from Rhizobium meliloti.</title>
        <authorList>
            <person name="Platt M.K."/>
            <person name="Miller K.J."/>
            <person name="Lane W.S."/>
            <person name="Kennedy E.P."/>
        </authorList>
    </citation>
    <scope>PROTEIN SEQUENCE OF 2-70</scope>
</reference>
<reference key="2">
    <citation type="journal article" date="1987" name="Biochemistry">
        <title>Purification and characterization of Rhodobacter sphaeroides acyl carrier protein.</title>
        <authorList>
            <person name="Cooper C.L."/>
            <person name="Boyce S.G."/>
            <person name="Lueking D.R."/>
        </authorList>
    </citation>
    <scope>PROTEIN SEQUENCE OF 2-47</scope>
    <scope>PHOSPHOPANTETHEINYLATION AT SER-37</scope>
</reference>
<accession>P12784</accession>
<proteinExistence type="evidence at protein level"/>
<comment type="function">
    <text>Carrier of the growing fatty acid chain in fatty acid biosynthesis.</text>
</comment>
<comment type="pathway">
    <text evidence="1">Lipid metabolism; fatty acid biosynthesis.</text>
</comment>
<comment type="subcellular location">
    <subcellularLocation>
        <location evidence="1">Cytoplasm</location>
    </subcellularLocation>
</comment>
<comment type="PTM">
    <text>4'-phosphopantetheine is transferred from CoA to a specific serine of apo-ACP by AcpS. This modification is essential for activity because fatty acids are bound in thioester linkage to the sulfhydryl of the prosthetic group.</text>
</comment>
<comment type="similarity">
    <text evidence="1">Belongs to the acyl carrier protein (ACP) family.</text>
</comment>
<name>ACP_CERSP</name>
<feature type="initiator methionine" description="Removed" evidence="3 4">
    <location>
        <position position="1"/>
    </location>
</feature>
<feature type="chain" id="PRO_0000180178" description="Acyl carrier protein">
    <location>
        <begin position="2"/>
        <end position="70"/>
    </location>
</feature>
<feature type="domain" description="Carrier" evidence="2">
    <location>
        <begin position="2"/>
        <end position="70"/>
    </location>
</feature>
<feature type="modified residue" description="O-(pantetheine 4'-phosphoryl)serine" evidence="2 4">
    <location>
        <position position="37"/>
    </location>
</feature>
<protein>
    <recommendedName>
        <fullName evidence="1">Acyl carrier protein</fullName>
        <shortName evidence="1">ACP</shortName>
    </recommendedName>
</protein>